<feature type="signal peptide" evidence="2">
    <location>
        <begin position="1"/>
        <end position="18"/>
    </location>
</feature>
<feature type="propeptide" id="PRO_0000416397" evidence="1">
    <location>
        <begin position="19"/>
        <end position="24"/>
    </location>
</feature>
<feature type="chain" id="PRO_0000416398" description="Serine protease VLSP-1">
    <location>
        <begin position="25"/>
        <end position="260"/>
    </location>
</feature>
<feature type="domain" description="Peptidase S1" evidence="3">
    <location>
        <begin position="25"/>
        <end position="251"/>
    </location>
</feature>
<feature type="active site" description="Charge relay system" evidence="1">
    <location>
        <position position="67"/>
    </location>
</feature>
<feature type="active site" description="Charge relay system" evidence="1">
    <location>
        <position position="112"/>
    </location>
</feature>
<feature type="active site" description="Charge relay system" evidence="1">
    <location>
        <position position="206"/>
    </location>
</feature>
<feature type="glycosylation site" description="N-linked (GlcNAc...) asparagine" evidence="2">
    <location>
        <position position="44"/>
    </location>
</feature>
<feature type="glycosylation site" description="N-linked (GlcNAc...) asparagine" evidence="2">
    <location>
        <position position="103"/>
    </location>
</feature>
<feature type="glycosylation site" description="N-linked (GlcNAc...) asparagine" evidence="2">
    <location>
        <position position="156"/>
    </location>
</feature>
<feature type="disulfide bond" evidence="3">
    <location>
        <begin position="31"/>
        <end position="165"/>
    </location>
</feature>
<feature type="disulfide bond" evidence="3">
    <location>
        <begin position="52"/>
        <end position="68"/>
    </location>
</feature>
<feature type="disulfide bond" evidence="3">
    <location>
        <begin position="100"/>
        <end position="258"/>
    </location>
</feature>
<feature type="disulfide bond" evidence="3">
    <location>
        <begin position="144"/>
        <end position="212"/>
    </location>
</feature>
<feature type="disulfide bond" evidence="3">
    <location>
        <begin position="176"/>
        <end position="191"/>
    </location>
</feature>
<feature type="disulfide bond" evidence="3">
    <location>
        <begin position="202"/>
        <end position="227"/>
    </location>
</feature>
<dbReference type="EC" id="3.4.21.-"/>
<dbReference type="EMBL" id="GU570565">
    <property type="protein sequence ID" value="ADN04916.1"/>
    <property type="molecule type" value="mRNA"/>
</dbReference>
<dbReference type="SMR" id="E0Y418"/>
<dbReference type="MEROPS" id="S01.497"/>
<dbReference type="GO" id="GO:0005576">
    <property type="term" value="C:extracellular region"/>
    <property type="evidence" value="ECO:0007669"/>
    <property type="project" value="UniProtKB-SubCell"/>
</dbReference>
<dbReference type="GO" id="GO:0030141">
    <property type="term" value="C:secretory granule"/>
    <property type="evidence" value="ECO:0007669"/>
    <property type="project" value="TreeGrafter"/>
</dbReference>
<dbReference type="GO" id="GO:0004252">
    <property type="term" value="F:serine-type endopeptidase activity"/>
    <property type="evidence" value="ECO:0007669"/>
    <property type="project" value="InterPro"/>
</dbReference>
<dbReference type="GO" id="GO:0090729">
    <property type="term" value="F:toxin activity"/>
    <property type="evidence" value="ECO:0007669"/>
    <property type="project" value="UniProtKB-KW"/>
</dbReference>
<dbReference type="GO" id="GO:0006508">
    <property type="term" value="P:proteolysis"/>
    <property type="evidence" value="ECO:0007669"/>
    <property type="project" value="UniProtKB-KW"/>
</dbReference>
<dbReference type="CDD" id="cd00190">
    <property type="entry name" value="Tryp_SPc"/>
    <property type="match status" value="1"/>
</dbReference>
<dbReference type="FunFam" id="2.40.10.10:FF:000158">
    <property type="entry name" value="Thrombin-like enzyme saxthrombin"/>
    <property type="match status" value="1"/>
</dbReference>
<dbReference type="FunFam" id="2.40.10.10:FF:000153">
    <property type="entry name" value="Venom plasminogen activator TSV-PA"/>
    <property type="match status" value="1"/>
</dbReference>
<dbReference type="Gene3D" id="2.40.10.10">
    <property type="entry name" value="Trypsin-like serine proteases"/>
    <property type="match status" value="2"/>
</dbReference>
<dbReference type="InterPro" id="IPR009003">
    <property type="entry name" value="Peptidase_S1_PA"/>
</dbReference>
<dbReference type="InterPro" id="IPR043504">
    <property type="entry name" value="Peptidase_S1_PA_chymotrypsin"/>
</dbReference>
<dbReference type="InterPro" id="IPR001314">
    <property type="entry name" value="Peptidase_S1A"/>
</dbReference>
<dbReference type="InterPro" id="IPR001254">
    <property type="entry name" value="Trypsin_dom"/>
</dbReference>
<dbReference type="InterPro" id="IPR018114">
    <property type="entry name" value="TRYPSIN_HIS"/>
</dbReference>
<dbReference type="PANTHER" id="PTHR24271:SF47">
    <property type="entry name" value="KALLIKREIN-1"/>
    <property type="match status" value="1"/>
</dbReference>
<dbReference type="PANTHER" id="PTHR24271">
    <property type="entry name" value="KALLIKREIN-RELATED"/>
    <property type="match status" value="1"/>
</dbReference>
<dbReference type="Pfam" id="PF00089">
    <property type="entry name" value="Trypsin"/>
    <property type="match status" value="1"/>
</dbReference>
<dbReference type="PRINTS" id="PR00722">
    <property type="entry name" value="CHYMOTRYPSIN"/>
</dbReference>
<dbReference type="SMART" id="SM00020">
    <property type="entry name" value="Tryp_SPc"/>
    <property type="match status" value="1"/>
</dbReference>
<dbReference type="SUPFAM" id="SSF50494">
    <property type="entry name" value="Trypsin-like serine proteases"/>
    <property type="match status" value="1"/>
</dbReference>
<dbReference type="PROSITE" id="PS50240">
    <property type="entry name" value="TRYPSIN_DOM"/>
    <property type="match status" value="1"/>
</dbReference>
<dbReference type="PROSITE" id="PS00134">
    <property type="entry name" value="TRYPSIN_HIS"/>
    <property type="match status" value="1"/>
</dbReference>
<comment type="function">
    <text evidence="4">Snake venom serine protease that may act in the hemostasis system of the prey.</text>
</comment>
<comment type="subcellular location">
    <subcellularLocation>
        <location evidence="5">Secreted</location>
    </subcellularLocation>
</comment>
<comment type="tissue specificity">
    <text evidence="5">Expressed by the venom gland.</text>
</comment>
<comment type="similarity">
    <text evidence="4">Belongs to the peptidase S1 family. Snake venom subfamily.</text>
</comment>
<comment type="caution">
    <text evidence="4">The nucleotide accession number of this protein has been wrongly cited in a publication which is available in the nucleotide entry.</text>
</comment>
<name>VSP1_MACLB</name>
<accession>E0Y418</accession>
<organism>
    <name type="scientific">Macrovipera lebetinus</name>
    <name type="common">Levantine viper</name>
    <name type="synonym">Vipera lebetina</name>
    <dbReference type="NCBI Taxonomy" id="3148341"/>
    <lineage>
        <taxon>Eukaryota</taxon>
        <taxon>Metazoa</taxon>
        <taxon>Chordata</taxon>
        <taxon>Craniata</taxon>
        <taxon>Vertebrata</taxon>
        <taxon>Euteleostomi</taxon>
        <taxon>Lepidosauria</taxon>
        <taxon>Squamata</taxon>
        <taxon>Bifurcata</taxon>
        <taxon>Unidentata</taxon>
        <taxon>Episquamata</taxon>
        <taxon>Toxicofera</taxon>
        <taxon>Serpentes</taxon>
        <taxon>Colubroidea</taxon>
        <taxon>Viperidae</taxon>
        <taxon>Viperinae</taxon>
        <taxon>Macrovipera</taxon>
    </lineage>
</organism>
<protein>
    <recommendedName>
        <fullName>Serine protease VLSP-1</fullName>
        <ecNumber>3.4.21.-</ecNumber>
    </recommendedName>
    <alternativeName>
        <fullName>Snake venom serine protease</fullName>
        <shortName>SVSP</shortName>
    </alternativeName>
</protein>
<keyword id="KW-1015">Disulfide bond</keyword>
<keyword id="KW-0325">Glycoprotein</keyword>
<keyword id="KW-1199">Hemostasis impairing toxin</keyword>
<keyword id="KW-0378">Hydrolase</keyword>
<keyword id="KW-0645">Protease</keyword>
<keyword id="KW-0964">Secreted</keyword>
<keyword id="KW-0720">Serine protease</keyword>
<keyword id="KW-0732">Signal</keyword>
<keyword id="KW-0800">Toxin</keyword>
<proteinExistence type="evidence at transcript level"/>
<evidence type="ECO:0000250" key="1"/>
<evidence type="ECO:0000255" key="2"/>
<evidence type="ECO:0000255" key="3">
    <source>
        <dbReference type="PROSITE-ProRule" id="PRU00274"/>
    </source>
</evidence>
<evidence type="ECO:0000305" key="4"/>
<evidence type="ECO:0000305" key="5">
    <source ref="1"/>
</evidence>
<sequence length="260" mass="28702">MVLIRVLANLLVLHLSYAQKSSELVIGGDECNINEHPFLALMYNSTSMKFHCSGTLLNEEWVLTAAHCDMENMQIYLGVHDKKNPNKDQQTRVPKEMFFCLSNKSYTPWDKDIMLIRLNSPVTYSTHIAPFSLPSSPPTVGSVCRIMGWGAITSPNETYPDVPHCANIEIYDYSVCRKAYGGLPEKSRTLCAGVLQGGIDTCLADSGGPLICNGQFQGIVAWGRHPCAQPQLPAFYTKVFDYSDWIQSIIAGNTAATCPS</sequence>
<reference key="1">
    <citation type="submission" date="2010-01" db="EMBL/GenBank/DDBJ databases">
        <title>Serine proteases from Vipera lebetina snake venom.</title>
        <authorList>
            <person name="Siigur E."/>
            <person name="Aaspollu A."/>
            <person name="Siigur J."/>
        </authorList>
    </citation>
    <scope>NUCLEOTIDE SEQUENCE [MRNA]</scope>
    <source>
        <tissue>Venom gland</tissue>
    </source>
</reference>